<organism>
    <name type="scientific">Shigella sonnei</name>
    <dbReference type="NCBI Taxonomy" id="624"/>
    <lineage>
        <taxon>Bacteria</taxon>
        <taxon>Pseudomonadati</taxon>
        <taxon>Pseudomonadota</taxon>
        <taxon>Gammaproteobacteria</taxon>
        <taxon>Enterobacterales</taxon>
        <taxon>Enterobacteriaceae</taxon>
        <taxon>Shigella</taxon>
    </lineage>
</organism>
<name>IPGD_SHISO</name>
<reference key="1">
    <citation type="submission" date="1995-05" db="EMBL/GenBank/DDBJ databases">
        <title>Comparison and high conservation of nucleotide sequences of spa-mxi regions between S.sonnei and S.flexneri -- identification of a new gene coding plausible membrane protein.</title>
        <authorList>
            <person name="Arakawa E."/>
            <person name="Kato J."/>
            <person name="Ito K."/>
            <person name="Watanabe H."/>
        </authorList>
    </citation>
    <scope>NUCLEOTIDE SEQUENCE [GENOMIC DNA]</scope>
    <source>
        <strain>HW383</strain>
    </source>
</reference>
<evidence type="ECO:0000250" key="1"/>
<evidence type="ECO:0000255" key="2"/>
<evidence type="ECO:0000305" key="3"/>
<accession>Q55286</accession>
<sequence>MHITNLGLHQVSFQSGDSYKGAEETGKHKGVSVISYQRVKNGERNKGIEALNRLYLQNQTSLTGKSLLFARDRAEVFYEAIKLAGGDTSKIKAMMERLDTYKLGEVNKRHINELNKVISEEIRAQLGIKNKKELQTKIKQIFTDYLNNKNWGPVNKNISHHGKNYGFQLTPASHMKIGNKNIFVKEYNGKGICCASTRESDHIANMWLSKVVDDEGKEIFSGIRHGVISAYGLKKNSSERAVAARNKAEELVSAALYSRPELLSQALSGKTVDLKIVSTSLLTPTSLTGGEESMLKDQVNALKGLNSKRGEPTKLLIRNSDGLLKEVSVNLKVVTFNFGVNELALKMGLGWRNVDKLNDESICSLLGDNFLKNGVIGGWAAEAIEKNPPCKNDVIYLANQIKEIINKKLQKNDNGEPYKLSQRMTLLAYTIGAVPCWNCKSGKDRTGMQDAEIKREIIRKHETGQFSQLNSKLSSEEKRLFSTILMNSGNMEIQEMNTGVPGNKVMKKLPLSSLELSYSERIGDSKIWNMVKGYSSFV</sequence>
<geneLocation type="plasmid">
    <name>pINV</name>
</geneLocation>
<feature type="chain" id="PRO_0000220488" description="Inositol phosphate phosphatase IpgD">
    <location>
        <begin position="1"/>
        <end position="538"/>
    </location>
</feature>
<feature type="short sequence motif" description="CX5R motif">
    <location>
        <begin position="439"/>
        <end position="445"/>
    </location>
</feature>
<feature type="active site" evidence="2">
    <location>
        <position position="439"/>
    </location>
</feature>
<proteinExistence type="inferred from homology"/>
<gene>
    <name type="primary">ipgD</name>
</gene>
<protein>
    <recommendedName>
        <fullName>Inositol phosphate phosphatase IpgD</fullName>
        <ecNumber>3.1.3.78</ecNumber>
    </recommendedName>
    <alternativeName>
        <fullName>Effector protein IpgD</fullName>
    </alternativeName>
    <alternativeName>
        <fullName>Phosphatidylinositol 4,5-bisphosphate 4-phosphatase</fullName>
    </alternativeName>
</protein>
<keyword id="KW-0378">Hydrolase</keyword>
<keyword id="KW-0614">Plasmid</keyword>
<keyword id="KW-0964">Secreted</keyword>
<keyword id="KW-0843">Virulence</keyword>
<dbReference type="EC" id="3.1.3.78"/>
<dbReference type="EMBL" id="D50601">
    <property type="protein sequence ID" value="BAA09142.1"/>
    <property type="molecule type" value="Genomic_DNA"/>
</dbReference>
<dbReference type="RefSeq" id="WP_000548325.1">
    <property type="nucleotide sequence ID" value="NZ_CATNNN010000034.1"/>
</dbReference>
<dbReference type="SMR" id="Q55286"/>
<dbReference type="STRING" id="216599.GCA_000283715_05224"/>
<dbReference type="OMA" id="PCWNCKS"/>
<dbReference type="GO" id="GO:0005576">
    <property type="term" value="C:extracellular region"/>
    <property type="evidence" value="ECO:0007669"/>
    <property type="project" value="UniProtKB-SubCell"/>
</dbReference>
<dbReference type="GO" id="GO:0034597">
    <property type="term" value="F:phosphatidylinositol-4,5-bisphosphate 4-phosphatase activity"/>
    <property type="evidence" value="ECO:0007669"/>
    <property type="project" value="UniProtKB-EC"/>
</dbReference>
<dbReference type="InterPro" id="IPR008108">
    <property type="entry name" value="IpgD/SopB"/>
</dbReference>
<dbReference type="NCBIfam" id="NF011905">
    <property type="entry name" value="PRK15378.1"/>
    <property type="match status" value="1"/>
</dbReference>
<dbReference type="Pfam" id="PF05925">
    <property type="entry name" value="IpgD"/>
    <property type="match status" value="1"/>
</dbReference>
<dbReference type="PRINTS" id="PR01734">
    <property type="entry name" value="TYPE3OMBPROT"/>
</dbReference>
<comment type="function">
    <text evidence="1">Converts phosphatidylinositol 4,5-bisphosphate (PtdIns 4,5-P2) to PtdIns 5-P. IpgD is injected by Shigella into the host cell and is required for invasion. The accumulation of PtdIns 5-P causes membrane ruffling and actin cytoskeleton rearrangements at the entry site (By similarity).</text>
</comment>
<comment type="catalytic activity">
    <reaction>
        <text>a 1,2-diacyl-sn-glycero-3-phospho-(1D-myo-inositol-4,5-bisphosphate) + H2O = a 1,2-diacyl-sn-glycero-3-phospho-(1D-myo-inositol-5-phosphate) + phosphate</text>
        <dbReference type="Rhea" id="RHEA:25674"/>
        <dbReference type="ChEBI" id="CHEBI:15377"/>
        <dbReference type="ChEBI" id="CHEBI:43474"/>
        <dbReference type="ChEBI" id="CHEBI:57795"/>
        <dbReference type="ChEBI" id="CHEBI:58456"/>
        <dbReference type="EC" id="3.1.3.78"/>
    </reaction>
</comment>
<comment type="subcellular location">
    <subcellularLocation>
        <location evidence="1">Secreted</location>
    </subcellularLocation>
    <text evidence="1">Secreted via the Mxi-Spa type III secretion system. It is stored in the bacterial cytoplasm associated with the chaperone IpgE before being secreted in response to activation of the type III secretion system (By similarity).</text>
</comment>
<comment type="domain">
    <text>Contains the consensus sequence Cys-X(5)-Arg characteristic of Mg-independent phosphatases.</text>
</comment>
<comment type="similarity">
    <text evidence="3">Belongs to the phosphatase IpgD/SopB family.</text>
</comment>